<proteinExistence type="inferred from homology"/>
<evidence type="ECO:0000255" key="1">
    <source>
        <dbReference type="HAMAP-Rule" id="MF_00719"/>
    </source>
</evidence>
<keyword id="KW-1003">Cell membrane</keyword>
<keyword id="KW-0169">Cobalamin biosynthesis</keyword>
<keyword id="KW-0460">Magnesium</keyword>
<keyword id="KW-0472">Membrane</keyword>
<keyword id="KW-1185">Reference proteome</keyword>
<keyword id="KW-0808">Transferase</keyword>
<keyword id="KW-0812">Transmembrane</keyword>
<keyword id="KW-1133">Transmembrane helix</keyword>
<gene>
    <name evidence="1" type="primary">cobS</name>
    <name type="ordered locus">CKL_3341</name>
</gene>
<feature type="chain" id="PRO_1000132569" description="Adenosylcobinamide-GDP ribazoletransferase">
    <location>
        <begin position="1"/>
        <end position="252"/>
    </location>
</feature>
<feature type="transmembrane region" description="Helical" evidence="1">
    <location>
        <begin position="34"/>
        <end position="54"/>
    </location>
</feature>
<feature type="transmembrane region" description="Helical" evidence="1">
    <location>
        <begin position="55"/>
        <end position="75"/>
    </location>
</feature>
<feature type="transmembrane region" description="Helical" evidence="1">
    <location>
        <begin position="113"/>
        <end position="133"/>
    </location>
</feature>
<feature type="transmembrane region" description="Helical" evidence="1">
    <location>
        <begin position="138"/>
        <end position="158"/>
    </location>
</feature>
<feature type="transmembrane region" description="Helical" evidence="1">
    <location>
        <begin position="174"/>
        <end position="194"/>
    </location>
</feature>
<feature type="transmembrane region" description="Helical" evidence="1">
    <location>
        <begin position="198"/>
        <end position="218"/>
    </location>
</feature>
<feature type="transmembrane region" description="Helical" evidence="1">
    <location>
        <begin position="230"/>
        <end position="250"/>
    </location>
</feature>
<protein>
    <recommendedName>
        <fullName evidence="1">Adenosylcobinamide-GDP ribazoletransferase</fullName>
        <ecNumber evidence="1">2.7.8.26</ecNumber>
    </recommendedName>
    <alternativeName>
        <fullName evidence="1">Cobalamin synthase</fullName>
    </alternativeName>
    <alternativeName>
        <fullName evidence="1">Cobalamin-5'-phosphate synthase</fullName>
    </alternativeName>
</protein>
<sequence length="252" mass="28198">MKELLNDFFLILQLLTRIPVNRNLLCRRENFRRGASFMPLVGVIVGGIQWIIYKLCIIIFSLNVSIVIVILAGIVLTGALHVDGLGDMCDGFFSFKEKGKIIEIMKDSRIGTYACLAIIIDILLKYSFFCSIVPSFSLIIIIAPVMSRFSIVFIAFIGKPAKSTGSGNLFVENIGKWQLFWAAFITVITLFFLMNMNFIYVIILIFAGLFMSFLFNVFCNRKAGGLTGDLLGANNEIVEILTMVMLCVIITK</sequence>
<name>COBS_CLOK5</name>
<organism>
    <name type="scientific">Clostridium kluyveri (strain ATCC 8527 / DSM 555 / NBRC 12016 / NCIMB 10680 / K1)</name>
    <dbReference type="NCBI Taxonomy" id="431943"/>
    <lineage>
        <taxon>Bacteria</taxon>
        <taxon>Bacillati</taxon>
        <taxon>Bacillota</taxon>
        <taxon>Clostridia</taxon>
        <taxon>Eubacteriales</taxon>
        <taxon>Clostridiaceae</taxon>
        <taxon>Clostridium</taxon>
    </lineage>
</organism>
<reference key="1">
    <citation type="journal article" date="2008" name="Proc. Natl. Acad. Sci. U.S.A.">
        <title>The genome of Clostridium kluyveri, a strict anaerobe with unique metabolic features.</title>
        <authorList>
            <person name="Seedorf H."/>
            <person name="Fricke W.F."/>
            <person name="Veith B."/>
            <person name="Brueggemann H."/>
            <person name="Liesegang H."/>
            <person name="Strittmatter A."/>
            <person name="Miethke M."/>
            <person name="Buckel W."/>
            <person name="Hinderberger J."/>
            <person name="Li F."/>
            <person name="Hagemeier C."/>
            <person name="Thauer R.K."/>
            <person name="Gottschalk G."/>
        </authorList>
    </citation>
    <scope>NUCLEOTIDE SEQUENCE [LARGE SCALE GENOMIC DNA]</scope>
    <source>
        <strain>ATCC 8527 / DSM 555 / NBRC 12016 / NCIMB 10680 / K1</strain>
    </source>
</reference>
<dbReference type="EC" id="2.7.8.26" evidence="1"/>
<dbReference type="EMBL" id="CP000673">
    <property type="protein sequence ID" value="EDK35344.1"/>
    <property type="molecule type" value="Genomic_DNA"/>
</dbReference>
<dbReference type="RefSeq" id="WP_012103674.1">
    <property type="nucleotide sequence ID" value="NC_009706.1"/>
</dbReference>
<dbReference type="STRING" id="431943.CKL_3341"/>
<dbReference type="KEGG" id="ckl:CKL_3341"/>
<dbReference type="eggNOG" id="COG0368">
    <property type="taxonomic scope" value="Bacteria"/>
</dbReference>
<dbReference type="HOGENOM" id="CLU_057426_1_2_9"/>
<dbReference type="UniPathway" id="UPA00148">
    <property type="reaction ID" value="UER00238"/>
</dbReference>
<dbReference type="Proteomes" id="UP000002411">
    <property type="component" value="Chromosome"/>
</dbReference>
<dbReference type="GO" id="GO:0005886">
    <property type="term" value="C:plasma membrane"/>
    <property type="evidence" value="ECO:0007669"/>
    <property type="project" value="UniProtKB-SubCell"/>
</dbReference>
<dbReference type="GO" id="GO:0051073">
    <property type="term" value="F:adenosylcobinamide-GDP ribazoletransferase activity"/>
    <property type="evidence" value="ECO:0007669"/>
    <property type="project" value="UniProtKB-UniRule"/>
</dbReference>
<dbReference type="GO" id="GO:0008818">
    <property type="term" value="F:cobalamin 5'-phosphate synthase activity"/>
    <property type="evidence" value="ECO:0007669"/>
    <property type="project" value="UniProtKB-UniRule"/>
</dbReference>
<dbReference type="GO" id="GO:0009236">
    <property type="term" value="P:cobalamin biosynthetic process"/>
    <property type="evidence" value="ECO:0007669"/>
    <property type="project" value="UniProtKB-UniRule"/>
</dbReference>
<dbReference type="HAMAP" id="MF_00719">
    <property type="entry name" value="CobS"/>
    <property type="match status" value="1"/>
</dbReference>
<dbReference type="InterPro" id="IPR003805">
    <property type="entry name" value="CobS"/>
</dbReference>
<dbReference type="NCBIfam" id="TIGR00317">
    <property type="entry name" value="cobS"/>
    <property type="match status" value="1"/>
</dbReference>
<dbReference type="PANTHER" id="PTHR34148">
    <property type="entry name" value="ADENOSYLCOBINAMIDE-GDP RIBAZOLETRANSFERASE"/>
    <property type="match status" value="1"/>
</dbReference>
<dbReference type="PANTHER" id="PTHR34148:SF1">
    <property type="entry name" value="ADENOSYLCOBINAMIDE-GDP RIBAZOLETRANSFERASE"/>
    <property type="match status" value="1"/>
</dbReference>
<dbReference type="Pfam" id="PF02654">
    <property type="entry name" value="CobS"/>
    <property type="match status" value="1"/>
</dbReference>
<accession>A5N2J8</accession>
<comment type="function">
    <text evidence="1">Joins adenosylcobinamide-GDP and alpha-ribazole to generate adenosylcobalamin (Ado-cobalamin). Also synthesizes adenosylcobalamin 5'-phosphate from adenosylcobinamide-GDP and alpha-ribazole 5'-phosphate.</text>
</comment>
<comment type="catalytic activity">
    <reaction evidence="1">
        <text>alpha-ribazole + adenosylcob(III)inamide-GDP = adenosylcob(III)alamin + GMP + H(+)</text>
        <dbReference type="Rhea" id="RHEA:16049"/>
        <dbReference type="ChEBI" id="CHEBI:10329"/>
        <dbReference type="ChEBI" id="CHEBI:15378"/>
        <dbReference type="ChEBI" id="CHEBI:18408"/>
        <dbReference type="ChEBI" id="CHEBI:58115"/>
        <dbReference type="ChEBI" id="CHEBI:60487"/>
        <dbReference type="EC" id="2.7.8.26"/>
    </reaction>
</comment>
<comment type="catalytic activity">
    <reaction evidence="1">
        <text>alpha-ribazole 5'-phosphate + adenosylcob(III)inamide-GDP = adenosylcob(III)alamin 5'-phosphate + GMP + H(+)</text>
        <dbReference type="Rhea" id="RHEA:23560"/>
        <dbReference type="ChEBI" id="CHEBI:15378"/>
        <dbReference type="ChEBI" id="CHEBI:57918"/>
        <dbReference type="ChEBI" id="CHEBI:58115"/>
        <dbReference type="ChEBI" id="CHEBI:60487"/>
        <dbReference type="ChEBI" id="CHEBI:60493"/>
        <dbReference type="EC" id="2.7.8.26"/>
    </reaction>
</comment>
<comment type="cofactor">
    <cofactor evidence="1">
        <name>Mg(2+)</name>
        <dbReference type="ChEBI" id="CHEBI:18420"/>
    </cofactor>
</comment>
<comment type="pathway">
    <text evidence="1">Cofactor biosynthesis; adenosylcobalamin biosynthesis; adenosylcobalamin from cob(II)yrinate a,c-diamide: step 7/7.</text>
</comment>
<comment type="subcellular location">
    <subcellularLocation>
        <location evidence="1">Cell membrane</location>
        <topology evidence="1">Multi-pass membrane protein</topology>
    </subcellularLocation>
</comment>
<comment type="similarity">
    <text evidence="1">Belongs to the CobS family.</text>
</comment>